<protein>
    <recommendedName>
        <fullName evidence="1">DNA ligase</fullName>
        <ecNumber evidence="1">6.5.1.2</ecNumber>
    </recommendedName>
    <alternativeName>
        <fullName evidence="1">Polydeoxyribonucleotide synthase [NAD(+)]</fullName>
    </alternativeName>
</protein>
<evidence type="ECO:0000255" key="1">
    <source>
        <dbReference type="HAMAP-Rule" id="MF_01588"/>
    </source>
</evidence>
<comment type="function">
    <text evidence="1">DNA ligase that catalyzes the formation of phosphodiester linkages between 5'-phosphoryl and 3'-hydroxyl groups in double-stranded DNA using NAD as a coenzyme and as the energy source for the reaction. It is essential for DNA replication and repair of damaged DNA.</text>
</comment>
<comment type="catalytic activity">
    <reaction evidence="1">
        <text>NAD(+) + (deoxyribonucleotide)n-3'-hydroxyl + 5'-phospho-(deoxyribonucleotide)m = (deoxyribonucleotide)n+m + AMP + beta-nicotinamide D-nucleotide.</text>
        <dbReference type="EC" id="6.5.1.2"/>
    </reaction>
</comment>
<comment type="cofactor">
    <cofactor evidence="1">
        <name>Mg(2+)</name>
        <dbReference type="ChEBI" id="CHEBI:18420"/>
    </cofactor>
    <cofactor evidence="1">
        <name>Mn(2+)</name>
        <dbReference type="ChEBI" id="CHEBI:29035"/>
    </cofactor>
</comment>
<comment type="similarity">
    <text evidence="1">Belongs to the NAD-dependent DNA ligase family. LigA subfamily.</text>
</comment>
<keyword id="KW-0227">DNA damage</keyword>
<keyword id="KW-0234">DNA repair</keyword>
<keyword id="KW-0235">DNA replication</keyword>
<keyword id="KW-0436">Ligase</keyword>
<keyword id="KW-0460">Magnesium</keyword>
<keyword id="KW-0464">Manganese</keyword>
<keyword id="KW-0479">Metal-binding</keyword>
<keyword id="KW-0520">NAD</keyword>
<keyword id="KW-0862">Zinc</keyword>
<reference key="1">
    <citation type="journal article" date="2006" name="J. Bacteriol.">
        <title>Chromosome rearrangement and diversification of Francisella tularensis revealed by the type B (OSU18) genome sequence.</title>
        <authorList>
            <person name="Petrosino J.F."/>
            <person name="Xiang Q."/>
            <person name="Karpathy S.E."/>
            <person name="Jiang H."/>
            <person name="Yerrapragada S."/>
            <person name="Liu Y."/>
            <person name="Gioia J."/>
            <person name="Hemphill L."/>
            <person name="Gonzalez A."/>
            <person name="Raghavan T.M."/>
            <person name="Uzman A."/>
            <person name="Fox G.E."/>
            <person name="Highlander S."/>
            <person name="Reichard M."/>
            <person name="Morton R.J."/>
            <person name="Clinkenbeard K.D."/>
            <person name="Weinstock G.M."/>
        </authorList>
    </citation>
    <scope>NUCLEOTIDE SEQUENCE [LARGE SCALE GENOMIC DNA]</scope>
    <source>
        <strain>OSU18</strain>
    </source>
</reference>
<feature type="chain" id="PRO_0000313239" description="DNA ligase">
    <location>
        <begin position="1"/>
        <end position="678"/>
    </location>
</feature>
<feature type="domain" description="BRCT" evidence="1">
    <location>
        <begin position="602"/>
        <end position="678"/>
    </location>
</feature>
<feature type="active site" description="N6-AMP-lysine intermediate" evidence="1">
    <location>
        <position position="124"/>
    </location>
</feature>
<feature type="binding site" evidence="1">
    <location>
        <begin position="47"/>
        <end position="51"/>
    </location>
    <ligand>
        <name>NAD(+)</name>
        <dbReference type="ChEBI" id="CHEBI:57540"/>
    </ligand>
</feature>
<feature type="binding site" evidence="1">
    <location>
        <begin position="96"/>
        <end position="97"/>
    </location>
    <ligand>
        <name>NAD(+)</name>
        <dbReference type="ChEBI" id="CHEBI:57540"/>
    </ligand>
</feature>
<feature type="binding site" evidence="1">
    <location>
        <position position="122"/>
    </location>
    <ligand>
        <name>NAD(+)</name>
        <dbReference type="ChEBI" id="CHEBI:57540"/>
    </ligand>
</feature>
<feature type="binding site" evidence="1">
    <location>
        <position position="145"/>
    </location>
    <ligand>
        <name>NAD(+)</name>
        <dbReference type="ChEBI" id="CHEBI:57540"/>
    </ligand>
</feature>
<feature type="binding site" evidence="1">
    <location>
        <position position="182"/>
    </location>
    <ligand>
        <name>NAD(+)</name>
        <dbReference type="ChEBI" id="CHEBI:57540"/>
    </ligand>
</feature>
<feature type="binding site" evidence="1">
    <location>
        <position position="300"/>
    </location>
    <ligand>
        <name>NAD(+)</name>
        <dbReference type="ChEBI" id="CHEBI:57540"/>
    </ligand>
</feature>
<feature type="binding site" evidence="1">
    <location>
        <position position="324"/>
    </location>
    <ligand>
        <name>NAD(+)</name>
        <dbReference type="ChEBI" id="CHEBI:57540"/>
    </ligand>
</feature>
<feature type="binding site" evidence="1">
    <location>
        <position position="418"/>
    </location>
    <ligand>
        <name>Zn(2+)</name>
        <dbReference type="ChEBI" id="CHEBI:29105"/>
    </ligand>
</feature>
<feature type="binding site" evidence="1">
    <location>
        <position position="421"/>
    </location>
    <ligand>
        <name>Zn(2+)</name>
        <dbReference type="ChEBI" id="CHEBI:29105"/>
    </ligand>
</feature>
<feature type="binding site" evidence="1">
    <location>
        <position position="436"/>
    </location>
    <ligand>
        <name>Zn(2+)</name>
        <dbReference type="ChEBI" id="CHEBI:29105"/>
    </ligand>
</feature>
<feature type="binding site" evidence="1">
    <location>
        <position position="442"/>
    </location>
    <ligand>
        <name>Zn(2+)</name>
        <dbReference type="ChEBI" id="CHEBI:29105"/>
    </ligand>
</feature>
<sequence>MTPNEFFSIKYHILAKAELKAYIDKLADYLSQQSYLYHTLDKPIISDSDYDKLFRLLQDLVNDNPQFKPINSVLDRVGGEVLAGFETIKHKKKMTSLANVFSLEELRDFYDKIEYDIELECEPKMDGLAISIFYKNGKFDYAVTRGDGIQGEKVSENVKTIRNVPLKLNTSNPPEELEVRGEIILDKQSFLSLNEYMQTHENKTFANPRNAAAGSIRMLDSKVVAKRPLKLYSYGIGYFSKDFVYPETQFELMQLLQSFGFTISDNMFLAKNFSEVEEYHHKMSHQRADLAYDIDGLVFKVNNIKLQDTIGYTARGPKWAIAYKFPAEEVESEVLNVEFQVGRTGAITPVARLKPVAVGGVIVSNATLHNINEIKSKDIRVGDRVIVRRAGDVIPEVVKSLPQYRKSDAQIVEMPTNCPVCDSKIENVNDQAIYRCTGGWHCQAQTTERLKHFVSRKAMDIDKLGAKLIEQLVAANLIKYPADIYKLNFEQLTGLERMAAKSSQNVLDSITKSKEPSLARFIFAIGIKDIGEVSSDALANHFGSLESFRDAKFEELIEINYVGEIIANNIVSFWHDSLNIKIVEEFLAIGIKIQNPVKVEHAYNESFTGKTVVITGSFENYGRTELTQLLKSIGAKVTSSVSKKTDMVICGDNAGSKLTKAQELGVEVILEDNLKDLL</sequence>
<organism>
    <name type="scientific">Francisella tularensis subsp. holarctica (strain OSU18)</name>
    <dbReference type="NCBI Taxonomy" id="393011"/>
    <lineage>
        <taxon>Bacteria</taxon>
        <taxon>Pseudomonadati</taxon>
        <taxon>Pseudomonadota</taxon>
        <taxon>Gammaproteobacteria</taxon>
        <taxon>Thiotrichales</taxon>
        <taxon>Francisellaceae</taxon>
        <taxon>Francisella</taxon>
    </lineage>
</organism>
<name>DNLJ_FRATO</name>
<proteinExistence type="inferred from homology"/>
<gene>
    <name evidence="1" type="primary">ligA</name>
    <name type="ordered locus">FTH_0679</name>
</gene>
<dbReference type="EC" id="6.5.1.2" evidence="1"/>
<dbReference type="EMBL" id="CP000437">
    <property type="protein sequence ID" value="ABI82631.1"/>
    <property type="molecule type" value="Genomic_DNA"/>
</dbReference>
<dbReference type="RefSeq" id="WP_011648650.1">
    <property type="nucleotide sequence ID" value="NC_008369.1"/>
</dbReference>
<dbReference type="SMR" id="Q0BMQ3"/>
<dbReference type="KEGG" id="fth:FTH_0679"/>
<dbReference type="GO" id="GO:0005829">
    <property type="term" value="C:cytosol"/>
    <property type="evidence" value="ECO:0007669"/>
    <property type="project" value="TreeGrafter"/>
</dbReference>
<dbReference type="GO" id="GO:0003677">
    <property type="term" value="F:DNA binding"/>
    <property type="evidence" value="ECO:0007669"/>
    <property type="project" value="InterPro"/>
</dbReference>
<dbReference type="GO" id="GO:0003911">
    <property type="term" value="F:DNA ligase (NAD+) activity"/>
    <property type="evidence" value="ECO:0007669"/>
    <property type="project" value="UniProtKB-UniRule"/>
</dbReference>
<dbReference type="GO" id="GO:0046872">
    <property type="term" value="F:metal ion binding"/>
    <property type="evidence" value="ECO:0007669"/>
    <property type="project" value="UniProtKB-KW"/>
</dbReference>
<dbReference type="GO" id="GO:0006281">
    <property type="term" value="P:DNA repair"/>
    <property type="evidence" value="ECO:0007669"/>
    <property type="project" value="UniProtKB-KW"/>
</dbReference>
<dbReference type="GO" id="GO:0006260">
    <property type="term" value="P:DNA replication"/>
    <property type="evidence" value="ECO:0007669"/>
    <property type="project" value="UniProtKB-KW"/>
</dbReference>
<dbReference type="CDD" id="cd17748">
    <property type="entry name" value="BRCT_DNA_ligase_like"/>
    <property type="match status" value="1"/>
</dbReference>
<dbReference type="CDD" id="cd00114">
    <property type="entry name" value="LIGANc"/>
    <property type="match status" value="1"/>
</dbReference>
<dbReference type="FunFam" id="1.10.150.20:FF:000007">
    <property type="entry name" value="DNA ligase"/>
    <property type="match status" value="1"/>
</dbReference>
<dbReference type="FunFam" id="2.40.50.140:FF:000012">
    <property type="entry name" value="DNA ligase"/>
    <property type="match status" value="1"/>
</dbReference>
<dbReference type="FunFam" id="3.30.470.30:FF:000001">
    <property type="entry name" value="DNA ligase"/>
    <property type="match status" value="1"/>
</dbReference>
<dbReference type="Gene3D" id="6.20.10.30">
    <property type="match status" value="1"/>
</dbReference>
<dbReference type="Gene3D" id="1.10.150.20">
    <property type="entry name" value="5' to 3' exonuclease, C-terminal subdomain"/>
    <property type="match status" value="2"/>
</dbReference>
<dbReference type="Gene3D" id="3.40.50.10190">
    <property type="entry name" value="BRCT domain"/>
    <property type="match status" value="1"/>
</dbReference>
<dbReference type="Gene3D" id="3.30.470.30">
    <property type="entry name" value="DNA ligase/mRNA capping enzyme"/>
    <property type="match status" value="1"/>
</dbReference>
<dbReference type="Gene3D" id="1.10.287.610">
    <property type="entry name" value="Helix hairpin bin"/>
    <property type="match status" value="1"/>
</dbReference>
<dbReference type="Gene3D" id="2.40.50.140">
    <property type="entry name" value="Nucleic acid-binding proteins"/>
    <property type="match status" value="1"/>
</dbReference>
<dbReference type="HAMAP" id="MF_01588">
    <property type="entry name" value="DNA_ligase_A"/>
    <property type="match status" value="1"/>
</dbReference>
<dbReference type="InterPro" id="IPR001357">
    <property type="entry name" value="BRCT_dom"/>
</dbReference>
<dbReference type="InterPro" id="IPR036420">
    <property type="entry name" value="BRCT_dom_sf"/>
</dbReference>
<dbReference type="InterPro" id="IPR041663">
    <property type="entry name" value="DisA/LigA_HHH"/>
</dbReference>
<dbReference type="InterPro" id="IPR001679">
    <property type="entry name" value="DNA_ligase"/>
</dbReference>
<dbReference type="InterPro" id="IPR033136">
    <property type="entry name" value="DNA_ligase_CS"/>
</dbReference>
<dbReference type="InterPro" id="IPR013839">
    <property type="entry name" value="DNAligase_adenylation"/>
</dbReference>
<dbReference type="InterPro" id="IPR013840">
    <property type="entry name" value="DNAligase_N"/>
</dbReference>
<dbReference type="InterPro" id="IPR003583">
    <property type="entry name" value="Hlx-hairpin-Hlx_DNA-bd_motif"/>
</dbReference>
<dbReference type="InterPro" id="IPR012340">
    <property type="entry name" value="NA-bd_OB-fold"/>
</dbReference>
<dbReference type="InterPro" id="IPR004150">
    <property type="entry name" value="NAD_DNA_ligase_OB"/>
</dbReference>
<dbReference type="InterPro" id="IPR010994">
    <property type="entry name" value="RuvA_2-like"/>
</dbReference>
<dbReference type="InterPro" id="IPR004149">
    <property type="entry name" value="Znf_DNAligase_C4"/>
</dbReference>
<dbReference type="NCBIfam" id="TIGR00575">
    <property type="entry name" value="dnlj"/>
    <property type="match status" value="1"/>
</dbReference>
<dbReference type="NCBIfam" id="NF005932">
    <property type="entry name" value="PRK07956.1"/>
    <property type="match status" value="1"/>
</dbReference>
<dbReference type="PANTHER" id="PTHR23389">
    <property type="entry name" value="CHROMOSOME TRANSMISSION FIDELITY FACTOR 18"/>
    <property type="match status" value="1"/>
</dbReference>
<dbReference type="PANTHER" id="PTHR23389:SF9">
    <property type="entry name" value="DNA LIGASE"/>
    <property type="match status" value="1"/>
</dbReference>
<dbReference type="Pfam" id="PF00533">
    <property type="entry name" value="BRCT"/>
    <property type="match status" value="1"/>
</dbReference>
<dbReference type="Pfam" id="PF01653">
    <property type="entry name" value="DNA_ligase_aden"/>
    <property type="match status" value="1"/>
</dbReference>
<dbReference type="Pfam" id="PF03120">
    <property type="entry name" value="DNA_ligase_OB"/>
    <property type="match status" value="1"/>
</dbReference>
<dbReference type="Pfam" id="PF03119">
    <property type="entry name" value="DNA_ligase_ZBD"/>
    <property type="match status" value="1"/>
</dbReference>
<dbReference type="Pfam" id="PF12826">
    <property type="entry name" value="HHH_2"/>
    <property type="match status" value="1"/>
</dbReference>
<dbReference type="Pfam" id="PF22745">
    <property type="entry name" value="Nlig-Ia"/>
    <property type="match status" value="1"/>
</dbReference>
<dbReference type="PIRSF" id="PIRSF001604">
    <property type="entry name" value="LigA"/>
    <property type="match status" value="1"/>
</dbReference>
<dbReference type="SMART" id="SM00292">
    <property type="entry name" value="BRCT"/>
    <property type="match status" value="1"/>
</dbReference>
<dbReference type="SMART" id="SM00278">
    <property type="entry name" value="HhH1"/>
    <property type="match status" value="4"/>
</dbReference>
<dbReference type="SMART" id="SM00532">
    <property type="entry name" value="LIGANc"/>
    <property type="match status" value="1"/>
</dbReference>
<dbReference type="SUPFAM" id="SSF52113">
    <property type="entry name" value="BRCT domain"/>
    <property type="match status" value="1"/>
</dbReference>
<dbReference type="SUPFAM" id="SSF56091">
    <property type="entry name" value="DNA ligase/mRNA capping enzyme, catalytic domain"/>
    <property type="match status" value="1"/>
</dbReference>
<dbReference type="SUPFAM" id="SSF50249">
    <property type="entry name" value="Nucleic acid-binding proteins"/>
    <property type="match status" value="1"/>
</dbReference>
<dbReference type="SUPFAM" id="SSF47781">
    <property type="entry name" value="RuvA domain 2-like"/>
    <property type="match status" value="1"/>
</dbReference>
<dbReference type="PROSITE" id="PS50172">
    <property type="entry name" value="BRCT"/>
    <property type="match status" value="1"/>
</dbReference>
<dbReference type="PROSITE" id="PS01056">
    <property type="entry name" value="DNA_LIGASE_N2"/>
    <property type="match status" value="1"/>
</dbReference>
<accession>Q0BMQ3</accession>